<feature type="chain" id="PRO_0000070012" description="P2Y purinoceptor 2">
    <location>
        <begin position="1" status="less than"/>
        <end position="166" status="greater than"/>
    </location>
</feature>
<feature type="topological domain" description="Cytoplasmic" evidence="2">
    <location>
        <begin position="1" status="less than"/>
        <end position="24"/>
    </location>
</feature>
<feature type="transmembrane region" description="Helical; Name=4" evidence="2">
    <location>
        <begin position="25"/>
        <end position="45"/>
    </location>
</feature>
<feature type="topological domain" description="Extracellular" evidence="2">
    <location>
        <begin position="46"/>
        <end position="72"/>
    </location>
</feature>
<feature type="transmembrane region" description="Helical; Name=5" evidence="2">
    <location>
        <begin position="73"/>
        <end position="93"/>
    </location>
</feature>
<feature type="topological domain" description="Cytoplasmic" evidence="2">
    <location>
        <begin position="94"/>
        <end position="115"/>
    </location>
</feature>
<feature type="transmembrane region" description="Helical; Name=6" evidence="2">
    <location>
        <begin position="116"/>
        <end position="136"/>
    </location>
</feature>
<feature type="topological domain" description="Extracellular" evidence="2">
    <location>
        <begin position="137"/>
        <end position="159"/>
    </location>
</feature>
<feature type="transmembrane region" description="Helical; Name=7" evidence="2">
    <location>
        <begin position="160"/>
        <end position="166" status="greater than"/>
    </location>
</feature>
<feature type="non-terminal residue">
    <location>
        <position position="1"/>
    </location>
</feature>
<feature type="non-terminal residue">
    <location>
        <position position="166"/>
    </location>
</feature>
<accession>P58825</accession>
<dbReference type="EMBL" id="AF314034">
    <property type="protein sequence ID" value="AAM21974.1"/>
    <property type="molecule type" value="mRNA"/>
</dbReference>
<dbReference type="SMR" id="P58825"/>
<dbReference type="BindingDB" id="P58825"/>
<dbReference type="PaxDb" id="10029-XP_007616953.1"/>
<dbReference type="eggNOG" id="ENOG502QSTF">
    <property type="taxonomic scope" value="Eukaryota"/>
</dbReference>
<dbReference type="Proteomes" id="UP000694386">
    <property type="component" value="Unplaced"/>
</dbReference>
<dbReference type="Proteomes" id="UP001108280">
    <property type="component" value="Unplaced"/>
</dbReference>
<dbReference type="GO" id="GO:0005886">
    <property type="term" value="C:plasma membrane"/>
    <property type="evidence" value="ECO:0007669"/>
    <property type="project" value="UniProtKB-SubCell"/>
</dbReference>
<dbReference type="GO" id="GO:0031686">
    <property type="term" value="F:A1 adenosine receptor binding"/>
    <property type="evidence" value="ECO:0007669"/>
    <property type="project" value="TreeGrafter"/>
</dbReference>
<dbReference type="GO" id="GO:0045028">
    <property type="term" value="F:G protein-coupled purinergic nucleotide receptor activity"/>
    <property type="evidence" value="ECO:0007669"/>
    <property type="project" value="InterPro"/>
</dbReference>
<dbReference type="GO" id="GO:0045030">
    <property type="term" value="F:G protein-coupled UTP receptor activity"/>
    <property type="evidence" value="ECO:0007669"/>
    <property type="project" value="TreeGrafter"/>
</dbReference>
<dbReference type="GO" id="GO:0097746">
    <property type="term" value="P:blood vessel diameter maintenance"/>
    <property type="evidence" value="ECO:0007669"/>
    <property type="project" value="InterPro"/>
</dbReference>
<dbReference type="GO" id="GO:0007200">
    <property type="term" value="P:phospholipase C-activating G protein-coupled receptor signaling pathway"/>
    <property type="evidence" value="ECO:0007669"/>
    <property type="project" value="InterPro"/>
</dbReference>
<dbReference type="GO" id="GO:0070257">
    <property type="term" value="P:positive regulation of mucus secretion"/>
    <property type="evidence" value="ECO:0007669"/>
    <property type="project" value="InterPro"/>
</dbReference>
<dbReference type="Gene3D" id="1.20.1070.10">
    <property type="entry name" value="Rhodopsin 7-helix transmembrane proteins"/>
    <property type="match status" value="1"/>
</dbReference>
<dbReference type="InterPro" id="IPR000276">
    <property type="entry name" value="GPCR_Rhodpsn"/>
</dbReference>
<dbReference type="InterPro" id="IPR017452">
    <property type="entry name" value="GPCR_Rhodpsn_7TM"/>
</dbReference>
<dbReference type="InterPro" id="IPR000356">
    <property type="entry name" value="P2Y2_rcpt"/>
</dbReference>
<dbReference type="PANTHER" id="PTHR24231:SF17">
    <property type="entry name" value="P2Y PURINOCEPTOR 2"/>
    <property type="match status" value="1"/>
</dbReference>
<dbReference type="PANTHER" id="PTHR24231">
    <property type="entry name" value="PURINOCEPTOR-RELATED G-PROTEIN COUPLED RECEPTOR"/>
    <property type="match status" value="1"/>
</dbReference>
<dbReference type="Pfam" id="PF00001">
    <property type="entry name" value="7tm_1"/>
    <property type="match status" value="1"/>
</dbReference>
<dbReference type="PRINTS" id="PR00237">
    <property type="entry name" value="GPCRRHODOPSN"/>
</dbReference>
<dbReference type="PRINTS" id="PR00594">
    <property type="entry name" value="P2Y2PRNOCPTR"/>
</dbReference>
<dbReference type="PRINTS" id="PR01157">
    <property type="entry name" value="P2YPURNOCPTR"/>
</dbReference>
<dbReference type="SUPFAM" id="SSF81321">
    <property type="entry name" value="Family A G protein-coupled receptor-like"/>
    <property type="match status" value="1"/>
</dbReference>
<dbReference type="PROSITE" id="PS50262">
    <property type="entry name" value="G_PROTEIN_RECEP_F1_2"/>
    <property type="match status" value="1"/>
</dbReference>
<comment type="function">
    <text evidence="1">Receptor for ATP and UTP coupled to G-proteins that activate a phosphatidylinositol-calcium second messenger system.</text>
</comment>
<comment type="subcellular location">
    <subcellularLocation>
        <location>Cell membrane</location>
        <topology>Multi-pass membrane protein</topology>
    </subcellularLocation>
</comment>
<comment type="similarity">
    <text evidence="3">Belongs to the G-protein coupled receptor 1 family.</text>
</comment>
<proteinExistence type="evidence at transcript level"/>
<gene>
    <name type="primary">P2RY2</name>
</gene>
<protein>
    <recommendedName>
        <fullName>P2Y purinoceptor 2</fullName>
        <shortName>P2Y2</shortName>
    </recommendedName>
</protein>
<keyword id="KW-1003">Cell membrane</keyword>
<keyword id="KW-0297">G-protein coupled receptor</keyword>
<keyword id="KW-0472">Membrane</keyword>
<keyword id="KW-0675">Receptor</keyword>
<keyword id="KW-0807">Transducer</keyword>
<keyword id="KW-0812">Transmembrane</keyword>
<keyword id="KW-1133">Transmembrane helix</keyword>
<sequence>VHRCLGVLRPLHSLRWGRARYARRVAAVVWVLVLACQAPVLYFVTTSVRGTRITCHDTSARELFSHFVAYSSVMLSLLFAVPFSVILVCYVLMARRLLKPAYGTTGGLPRAKRKSVRTIALVLAVFTLCFLPFHVTRTLYYSFRSLDLSCHTLNAINMAYKITRPL</sequence>
<reference key="1">
    <citation type="submission" date="2000-10" db="EMBL/GenBank/DDBJ databases">
        <title>Involvement of P2Y2 purinoceptor in cystic fibrosis transmembrane conductance regulator activity.</title>
        <authorList>
            <person name="Chappe V."/>
            <person name="Marcet B."/>
            <person name="Gola M."/>
            <person name="Becq F."/>
            <person name="Tirard A."/>
            <person name="Verrier B."/>
        </authorList>
    </citation>
    <scope>NUCLEOTIDE SEQUENCE [MRNA]</scope>
</reference>
<evidence type="ECO:0000250" key="1"/>
<evidence type="ECO:0000255" key="2"/>
<evidence type="ECO:0000255" key="3">
    <source>
        <dbReference type="PROSITE-ProRule" id="PRU00521"/>
    </source>
</evidence>
<organism>
    <name type="scientific">Cricetulus griseus</name>
    <name type="common">Chinese hamster</name>
    <name type="synonym">Cricetulus barabensis griseus</name>
    <dbReference type="NCBI Taxonomy" id="10029"/>
    <lineage>
        <taxon>Eukaryota</taxon>
        <taxon>Metazoa</taxon>
        <taxon>Chordata</taxon>
        <taxon>Craniata</taxon>
        <taxon>Vertebrata</taxon>
        <taxon>Euteleostomi</taxon>
        <taxon>Mammalia</taxon>
        <taxon>Eutheria</taxon>
        <taxon>Euarchontoglires</taxon>
        <taxon>Glires</taxon>
        <taxon>Rodentia</taxon>
        <taxon>Myomorpha</taxon>
        <taxon>Muroidea</taxon>
        <taxon>Cricetidae</taxon>
        <taxon>Cricetinae</taxon>
        <taxon>Cricetulus</taxon>
    </lineage>
</organism>
<name>P2RY2_CRIGR</name>